<sequence>MAREGLTLRCTDCKMENYITKKNKKTKPEKIEVKKHCHKCNKHTLHREKK</sequence>
<organism>
    <name type="scientific">Mesomycoplasma hyopneumoniae (strain 232)</name>
    <name type="common">Mycoplasma hyopneumoniae</name>
    <dbReference type="NCBI Taxonomy" id="295358"/>
    <lineage>
        <taxon>Bacteria</taxon>
        <taxon>Bacillati</taxon>
        <taxon>Mycoplasmatota</taxon>
        <taxon>Mycoplasmoidales</taxon>
        <taxon>Metamycoplasmataceae</taxon>
        <taxon>Mesomycoplasma</taxon>
    </lineage>
</organism>
<proteinExistence type="inferred from homology"/>
<keyword id="KW-0687">Ribonucleoprotein</keyword>
<keyword id="KW-0689">Ribosomal protein</keyword>
<comment type="similarity">
    <text evidence="1">Belongs to the bacterial ribosomal protein bL33 family.</text>
</comment>
<accession>Q5ZZM8</accession>
<name>RL33_MESH2</name>
<evidence type="ECO:0000255" key="1">
    <source>
        <dbReference type="HAMAP-Rule" id="MF_00294"/>
    </source>
</evidence>
<evidence type="ECO:0000305" key="2"/>
<reference key="1">
    <citation type="journal article" date="2004" name="J. Bacteriol.">
        <title>The genome sequence of Mycoplasma hyopneumoniae strain 232, the agent of swine mycoplasmosis.</title>
        <authorList>
            <person name="Minion F.C."/>
            <person name="Lefkowitz E.J."/>
            <person name="Madsen M.L."/>
            <person name="Cleary B.J."/>
            <person name="Swartzell S.M."/>
            <person name="Mahairas G.G."/>
        </authorList>
    </citation>
    <scope>NUCLEOTIDE SEQUENCE [LARGE SCALE GENOMIC DNA]</scope>
    <source>
        <strain>232</strain>
    </source>
</reference>
<protein>
    <recommendedName>
        <fullName evidence="1">Large ribosomal subunit protein bL33</fullName>
    </recommendedName>
    <alternativeName>
        <fullName evidence="2">50S ribosomal protein L33</fullName>
    </alternativeName>
</protein>
<gene>
    <name evidence="1" type="primary">rpmG</name>
    <name type="ordered locus">mhp679</name>
</gene>
<dbReference type="EMBL" id="AE017332">
    <property type="protein sequence ID" value="AAV27668.1"/>
    <property type="molecule type" value="Genomic_DNA"/>
</dbReference>
<dbReference type="RefSeq" id="WP_011206510.1">
    <property type="nucleotide sequence ID" value="NC_006360.1"/>
</dbReference>
<dbReference type="SMR" id="Q5ZZM8"/>
<dbReference type="GeneID" id="41334961"/>
<dbReference type="KEGG" id="mhy:mhp679"/>
<dbReference type="eggNOG" id="COG0267">
    <property type="taxonomic scope" value="Bacteria"/>
</dbReference>
<dbReference type="HOGENOM" id="CLU_190949_0_1_14"/>
<dbReference type="PhylomeDB" id="Q5ZZM8"/>
<dbReference type="Proteomes" id="UP000006822">
    <property type="component" value="Chromosome"/>
</dbReference>
<dbReference type="GO" id="GO:0005737">
    <property type="term" value="C:cytoplasm"/>
    <property type="evidence" value="ECO:0007669"/>
    <property type="project" value="UniProtKB-ARBA"/>
</dbReference>
<dbReference type="GO" id="GO:1990904">
    <property type="term" value="C:ribonucleoprotein complex"/>
    <property type="evidence" value="ECO:0007669"/>
    <property type="project" value="UniProtKB-KW"/>
</dbReference>
<dbReference type="GO" id="GO:0005840">
    <property type="term" value="C:ribosome"/>
    <property type="evidence" value="ECO:0007669"/>
    <property type="project" value="UniProtKB-KW"/>
</dbReference>
<dbReference type="GO" id="GO:0003735">
    <property type="term" value="F:structural constituent of ribosome"/>
    <property type="evidence" value="ECO:0007669"/>
    <property type="project" value="InterPro"/>
</dbReference>
<dbReference type="GO" id="GO:0006412">
    <property type="term" value="P:translation"/>
    <property type="evidence" value="ECO:0007669"/>
    <property type="project" value="UniProtKB-UniRule"/>
</dbReference>
<dbReference type="Gene3D" id="2.20.28.120">
    <property type="entry name" value="Ribosomal protein L33"/>
    <property type="match status" value="1"/>
</dbReference>
<dbReference type="HAMAP" id="MF_00294">
    <property type="entry name" value="Ribosomal_bL33"/>
    <property type="match status" value="1"/>
</dbReference>
<dbReference type="InterPro" id="IPR001705">
    <property type="entry name" value="Ribosomal_bL33"/>
</dbReference>
<dbReference type="InterPro" id="IPR018264">
    <property type="entry name" value="Ribosomal_bL33_CS"/>
</dbReference>
<dbReference type="InterPro" id="IPR038584">
    <property type="entry name" value="Ribosomal_bL33_sf"/>
</dbReference>
<dbReference type="InterPro" id="IPR011332">
    <property type="entry name" value="Ribosomal_zn-bd"/>
</dbReference>
<dbReference type="NCBIfam" id="NF001764">
    <property type="entry name" value="PRK00504.1"/>
    <property type="match status" value="1"/>
</dbReference>
<dbReference type="NCBIfam" id="NF001860">
    <property type="entry name" value="PRK00595.1"/>
    <property type="match status" value="1"/>
</dbReference>
<dbReference type="NCBIfam" id="TIGR01023">
    <property type="entry name" value="rpmG_bact"/>
    <property type="match status" value="1"/>
</dbReference>
<dbReference type="PANTHER" id="PTHR43168">
    <property type="entry name" value="50S RIBOSOMAL PROTEIN L33, CHLOROPLASTIC"/>
    <property type="match status" value="1"/>
</dbReference>
<dbReference type="PANTHER" id="PTHR43168:SF2">
    <property type="entry name" value="LARGE RIBOSOMAL SUBUNIT PROTEIN BL33C"/>
    <property type="match status" value="1"/>
</dbReference>
<dbReference type="Pfam" id="PF00471">
    <property type="entry name" value="Ribosomal_L33"/>
    <property type="match status" value="1"/>
</dbReference>
<dbReference type="SUPFAM" id="SSF57829">
    <property type="entry name" value="Zn-binding ribosomal proteins"/>
    <property type="match status" value="1"/>
</dbReference>
<dbReference type="PROSITE" id="PS00582">
    <property type="entry name" value="RIBOSOMAL_L33"/>
    <property type="match status" value="1"/>
</dbReference>
<feature type="chain" id="PRO_1000059280" description="Large ribosomal subunit protein bL33">
    <location>
        <begin position="1"/>
        <end position="50"/>
    </location>
</feature>